<sequence>MTSLNDIVNKLSSSKIKTRSDALQNLRSYIIYSRNGNSLNQEDALIIEKAIKRAFELEWQISANHGKRQISKASQEQKLQDISYLLRTCVESYILLFREPHILALLDIILRHTFTANGSICEVVCLNFSKALRLLLSHSPHLHHLRFSDWQSLVSYCCQAIEKLSIAEETYVSDSEEEPISQKNYQEISIWKSHDVIRVKQEVVELIYVMRSLVQWYAAPINFVSEQLLKFFEFFFYAYTEETDAHLPALQCLFQLCAYAIPNCNDYSASVVLLVFKILINSDKWKRLDLRLQLIQCLAISYPLWSNSETWDPHRSIRSFNLDLLNSSFFSLKNFLNFFGKRSSLSLANFRFHTVEPKNNIAKLYDPRLHLFFSLRHNSFFESYFIYFFLAKLILLKKTVLSLASTEQANKKQKTCSQIEELLLQAELANISASSFSLQLMVIITAISDNLTNDDLLSIQKMSLNFTEKKNELQSWSFFILFNICYNKAYSSMLTTSCKKEILAAASRGLLNSVTSPVCYQILTYFNMYRPLCFASIFPFIKQQFILFNDYSPMLSYEAIDYWKSLYILLNENLFVGQSSFKSVFLKWLKWHLYHLFSKEGELPFFSFTDSSIIIFDLLMMIFYRPLSLSYITTEIRSPFERNLFHLKEAWSPVTLRFPYTTDEICKQSTEGCYPFNSNHTIDCDSLQNVIKMLESSIDEISSASYDKDELDKETPSFEAVMIFSQISFLCGFLNCFIQKKGIHNVTPNNLVIFKNLFPEVLSFVKSNHSYDPIINCISTNLQFTISDEPKHLRYEIGSDLIRSTHFRDSNPLKTLVLYIMDMASKNVFIKPQEFDHDEYFSQEEEDIYRPENLIRNHQILGLMEGSLEQIRNTDLFILQKYIDYFSSHPHDSLINILHLYPIETFCFGMSAIGAYFLDVARTSEPIFYKCLEILAQKILMNYDYERDEVYLMIFIKIFQKCVHSKLQFTDATLKLIVKITKFIEKVFIETKFSSLSGRQTFLKFIFQLSPTSHVYSKFDYQKLISLTLKDSDVCVIYNFVDDLVIFLKKCDKTLIEGFVLPILSIKIEKSLYKGFCYLYLTLKVFLSISSNRSALLYQLLKLANSYETSTIFEPLLRKLHIQSANIKQLFRIYRLEIFWSFVSKDLSNTTNDFLEFPYKPIYFSLSDFLKENSDEIILVLILTKNITLAKLITSRMSVDFSEKYTQLIPVITTYTHLSEVENKKYSLRFNSIDEALDVELLNRSKAFLFCLEMLKEVKELGSTFKSISSTSFKVYSQLTIFANRVSFNNSTAIPFFSTKSVLWYCNRLFQELEGFSSIPSVIDLVLRRLAIQLHFATDEELQVTISFRLCAFLCFSDPFITSNYLVMIVLRIARQLLSIPCTQSLGLGIARFHLKKFKPTDFDYFFQLAEFCMDFLGFCYNTIGTKMEAIQDFYTWFDGYVTALLNFEYEGYGFLRCQINFVRSVMTTKNEWIEVSNKLFERGHFLKRIAMNNYLCLYFWQVLDACPRNVLHSLSLEIWKCYKAYDITEFPDSLKLFFSDIMGWNFFKSPEIADLNHYIPKTDPRLCDTKTYEESKLIIWKLICQKACSLLFKYDILLDSFIEDCIRMFFENGNHQELRKFLNFPKDSIIYDSDFKTLVSEEGSFQWVKLQPTNFDSLSNWTKEETLKLLNMMGKSSTTHSLKLLSTYMVGFSTSIIQYIIHLILLEFDFNGNNKKQKEYVTQLILSGLLNKNTNSIRKTCMNILLYLRRQLGHHALNPFEANYWVPINYSVAASTAYDCHLYEQSLLFLTIHNTKTDELDITLLSDILSQLPCPDAYYGIKRETSFKNILLKAVHEKRSPLAISYLDAANMYRSNEDEGTKMMFSNTLNNAGFFSLNEFYIDSLKANDAIDECSNEVYASAWRMQKWDIPPLSLDNKTTKDCLVFEVLHAVHNYAIYGNYLHLEEYINKKLLLINPNEEPDSLLFYALAYDLKFLIRCNQSQFNCDILQLLKENKQMSSQLHECFQLLLEIRNVLLSLLQSHKQLDLSDDLASFRKYYILELLKISESFLIVDNLQNAFSVAMLSDALYRKFDLADENLKHDIDFLSSKILWQRDEKIDAIGMLSESLSKTNSSIFPSISYAYLGNWLYTTKSEKTELVSKNYFEKSLSHMSHLNAKEKAKIYCMFAQFCDNNYSSPDLTEDFKRMEKLYFEKKNDIQQLERSIVNASNMKEEKMLKNHHSREMSSFIIDEREYLRMSTFRSKMLTQSITHYLKCLSESDENDVLISRCCTMWLSNSHLDELNNSLQHYLQNLPCKKFIPVFYQLAARLMNENSKFQQSLTSICYNVGRNHPYHSLHVLFSLVSNVPEIENLDAGSRYRAVKKILDLLKVNQGLSNLVTKLLCSFENYVSLAEWNPRSKVDSTSFSRFPGYKWFLKDAANYGLPPITMNVKVNDTGDYSNIPTVSSFDDTIHFASGINAPKVITCLGSNGHTYKQLVKGGNDDLRQDAVMEQVFEQVNGFLRSYRKTSQRNLSMRTYKVIPLALKTGVIEWVQDTIPLGEYLDSAHKVYHPKEWSLSTCRKLIAEKQMEDLETRLKVYDLVCRHYRPVFRHFFLESYADPVQWFTTQTNYARSTAVASVLGHVLGLGDRHGQNILIDKTSGEVIHIDLGIAFEQGKKLPVPECVPFRLTRDVVDGMGITGVEGVFRRCMEFTLETLRREEDSLLSVLEVLRYDPLFSWLISPLRRMKKQKMQLENFNQPESGNITTDASRDPKIQRNNVSGESEAERAILKVRQKLSSTLSVEASVGELIRIAQDPSYLALMFCGWSAFQ</sequence>
<keyword id="KW-0067">ATP-binding</keyword>
<keyword id="KW-0156">Chromatin regulator</keyword>
<keyword id="KW-0158">Chromosome</keyword>
<keyword id="KW-0227">DNA damage</keyword>
<keyword id="KW-0418">Kinase</keyword>
<keyword id="KW-0547">Nucleotide-binding</keyword>
<keyword id="KW-0539">Nucleus</keyword>
<keyword id="KW-1185">Reference proteome</keyword>
<keyword id="KW-0723">Serine/threonine-protein kinase</keyword>
<keyword id="KW-0779">Telomere</keyword>
<keyword id="KW-0808">Transferase</keyword>
<reference key="1">
    <citation type="journal article" date="1998" name="Nat. Genet.">
        <title>Circular chromosome formation in a fission yeast mutant defective in two ATM homologues.</title>
        <authorList>
            <person name="Naitoh T."/>
            <person name="Matsuura A."/>
            <person name="Ishikawa F."/>
        </authorList>
    </citation>
    <scope>NUCLEOTIDE SEQUENCE [GENOMIC DNA]</scope>
    <scope>FUNCTION</scope>
    <source>
        <strain>972 / ATCC 24843</strain>
    </source>
</reference>
<reference key="2">
    <citation type="journal article" date="2002" name="Nature">
        <title>The genome sequence of Schizosaccharomyces pombe.</title>
        <authorList>
            <person name="Wood V."/>
            <person name="Gwilliam R."/>
            <person name="Rajandream M.A."/>
            <person name="Lyne M.H."/>
            <person name="Lyne R."/>
            <person name="Stewart A."/>
            <person name="Sgouros J.G."/>
            <person name="Peat N."/>
            <person name="Hayles J."/>
            <person name="Baker S.G."/>
            <person name="Basham D."/>
            <person name="Bowman S."/>
            <person name="Brooks K."/>
            <person name="Brown D."/>
            <person name="Brown S."/>
            <person name="Chillingworth T."/>
            <person name="Churcher C.M."/>
            <person name="Collins M."/>
            <person name="Connor R."/>
            <person name="Cronin A."/>
            <person name="Davis P."/>
            <person name="Feltwell T."/>
            <person name="Fraser A."/>
            <person name="Gentles S."/>
            <person name="Goble A."/>
            <person name="Hamlin N."/>
            <person name="Harris D.E."/>
            <person name="Hidalgo J."/>
            <person name="Hodgson G."/>
            <person name="Holroyd S."/>
            <person name="Hornsby T."/>
            <person name="Howarth S."/>
            <person name="Huckle E.J."/>
            <person name="Hunt S."/>
            <person name="Jagels K."/>
            <person name="James K.D."/>
            <person name="Jones L."/>
            <person name="Jones M."/>
            <person name="Leather S."/>
            <person name="McDonald S."/>
            <person name="McLean J."/>
            <person name="Mooney P."/>
            <person name="Moule S."/>
            <person name="Mungall K.L."/>
            <person name="Murphy L.D."/>
            <person name="Niblett D."/>
            <person name="Odell C."/>
            <person name="Oliver K."/>
            <person name="O'Neil S."/>
            <person name="Pearson D."/>
            <person name="Quail M.A."/>
            <person name="Rabbinowitsch E."/>
            <person name="Rutherford K.M."/>
            <person name="Rutter S."/>
            <person name="Saunders D."/>
            <person name="Seeger K."/>
            <person name="Sharp S."/>
            <person name="Skelton J."/>
            <person name="Simmonds M.N."/>
            <person name="Squares R."/>
            <person name="Squares S."/>
            <person name="Stevens K."/>
            <person name="Taylor K."/>
            <person name="Taylor R.G."/>
            <person name="Tivey A."/>
            <person name="Walsh S.V."/>
            <person name="Warren T."/>
            <person name="Whitehead S."/>
            <person name="Woodward J.R."/>
            <person name="Volckaert G."/>
            <person name="Aert R."/>
            <person name="Robben J."/>
            <person name="Grymonprez B."/>
            <person name="Weltjens I."/>
            <person name="Vanstreels E."/>
            <person name="Rieger M."/>
            <person name="Schaefer M."/>
            <person name="Mueller-Auer S."/>
            <person name="Gabel C."/>
            <person name="Fuchs M."/>
            <person name="Duesterhoeft A."/>
            <person name="Fritzc C."/>
            <person name="Holzer E."/>
            <person name="Moestl D."/>
            <person name="Hilbert H."/>
            <person name="Borzym K."/>
            <person name="Langer I."/>
            <person name="Beck A."/>
            <person name="Lehrach H."/>
            <person name="Reinhardt R."/>
            <person name="Pohl T.M."/>
            <person name="Eger P."/>
            <person name="Zimmermann W."/>
            <person name="Wedler H."/>
            <person name="Wambutt R."/>
            <person name="Purnelle B."/>
            <person name="Goffeau A."/>
            <person name="Cadieu E."/>
            <person name="Dreano S."/>
            <person name="Gloux S."/>
            <person name="Lelaure V."/>
            <person name="Mottier S."/>
            <person name="Galibert F."/>
            <person name="Aves S.J."/>
            <person name="Xiang Z."/>
            <person name="Hunt C."/>
            <person name="Moore K."/>
            <person name="Hurst S.M."/>
            <person name="Lucas M."/>
            <person name="Rochet M."/>
            <person name="Gaillardin C."/>
            <person name="Tallada V.A."/>
            <person name="Garzon A."/>
            <person name="Thode G."/>
            <person name="Daga R.R."/>
            <person name="Cruzado L."/>
            <person name="Jimenez J."/>
            <person name="Sanchez M."/>
            <person name="del Rey F."/>
            <person name="Benito J."/>
            <person name="Dominguez A."/>
            <person name="Revuelta J.L."/>
            <person name="Moreno S."/>
            <person name="Armstrong J."/>
            <person name="Forsburg S.L."/>
            <person name="Cerutti L."/>
            <person name="Lowe T."/>
            <person name="McCombie W.R."/>
            <person name="Paulsen I."/>
            <person name="Potashkin J."/>
            <person name="Shpakovski G.V."/>
            <person name="Ussery D."/>
            <person name="Barrell B.G."/>
            <person name="Nurse P."/>
        </authorList>
    </citation>
    <scope>NUCLEOTIDE SEQUENCE [LARGE SCALE GENOMIC DNA]</scope>
    <source>
        <strain>972 / ATCC 24843</strain>
    </source>
</reference>
<reference key="3">
    <citation type="journal article" date="1999" name="Genetics">
        <title>Genetic control of telomere integrity in Schizosaccharomyces pombe: rad3(+) and tel1(+) are parts of two regulatory networks independent of the downstream protein kinases chk1(+) and cds1(+).</title>
        <authorList>
            <person name="Matsuura A."/>
            <person name="Naito T."/>
            <person name="Ishikawa F."/>
        </authorList>
    </citation>
    <scope>FUNCTION</scope>
</reference>
<reference key="4">
    <citation type="journal article" date="2002" name="Genetics">
        <title>Telomere binding of checkpoint sensor and DNA repair proteins contributes to maintenance of functional fission yeast telomeres.</title>
        <authorList>
            <person name="Nakamura T.M."/>
            <person name="Moser B.A."/>
            <person name="Russell P."/>
        </authorList>
    </citation>
    <scope>FUNCTION</scope>
</reference>
<reference key="5">
    <citation type="journal article" date="2004" name="Mol. Cell. Biol.">
        <title>Histone H2A phosphorylation controls Crb2 recruitment at DNA breaks, maintains checkpoint arrest, and influences DNA repair in fission yeast.</title>
        <authorList>
            <person name="Nakamura T.M."/>
            <person name="Du L.-L."/>
            <person name="Redon C."/>
            <person name="Russell P."/>
        </authorList>
    </citation>
    <scope>FUNCTION</scope>
    <scope>PHOSPHORYLATION OF HISTONE H2A</scope>
</reference>
<reference key="6">
    <citation type="journal article" date="2005" name="Mol. Cell. Biol.">
        <title>ATM activation and its recruitment to damaged DNA require binding to the C-terminus of Nbs1.</title>
        <authorList>
            <person name="You Z."/>
            <person name="Chahwan C."/>
            <person name="Bailis J."/>
            <person name="Hunter T."/>
            <person name="Russell P."/>
        </authorList>
    </citation>
    <scope>INTERACTION WITH NBS1</scope>
    <scope>PHOSPHORYLATION OF HISTONE H2A</scope>
</reference>
<protein>
    <recommendedName>
        <fullName>Serine/threonine-protein kinase tel1</fullName>
        <ecNumber>2.7.11.1</ecNumber>
    </recommendedName>
    <alternativeName>
        <fullName>ATM homolog</fullName>
    </alternativeName>
    <alternativeName>
        <fullName>DNA-damage checkpoint kinase tel1</fullName>
    </alternativeName>
    <alternativeName>
        <fullName>Telomere length regulation protein 1</fullName>
    </alternativeName>
</protein>
<feature type="chain" id="PRO_0000227706" description="Serine/threonine-protein kinase tel1">
    <location>
        <begin position="1"/>
        <end position="2812"/>
    </location>
</feature>
<feature type="domain" description="FAT" evidence="3">
    <location>
        <begin position="1773"/>
        <end position="2347"/>
    </location>
</feature>
<feature type="domain" description="PI3K/PI4K catalytic" evidence="2">
    <location>
        <begin position="2449"/>
        <end position="2758"/>
    </location>
</feature>
<feature type="domain" description="FATC" evidence="3 4">
    <location>
        <begin position="2780"/>
        <end position="2812"/>
    </location>
</feature>
<feature type="region of interest" description="G-loop" evidence="2">
    <location>
        <begin position="2455"/>
        <end position="2461"/>
    </location>
</feature>
<feature type="region of interest" description="Catalytic loop" evidence="2">
    <location>
        <begin position="2627"/>
        <end position="2635"/>
    </location>
</feature>
<feature type="region of interest" description="Activation loop" evidence="2">
    <location>
        <begin position="2647"/>
        <end position="2671"/>
    </location>
</feature>
<feature type="region of interest" description="Disordered" evidence="5">
    <location>
        <begin position="2739"/>
        <end position="2763"/>
    </location>
</feature>
<feature type="compositionally biased region" description="Polar residues" evidence="5">
    <location>
        <begin position="2739"/>
        <end position="2749"/>
    </location>
</feature>
<evidence type="ECO:0000250" key="1"/>
<evidence type="ECO:0000255" key="2">
    <source>
        <dbReference type="PROSITE-ProRule" id="PRU00269"/>
    </source>
</evidence>
<evidence type="ECO:0000255" key="3">
    <source>
        <dbReference type="PROSITE-ProRule" id="PRU00534"/>
    </source>
</evidence>
<evidence type="ECO:0000255" key="4">
    <source>
        <dbReference type="PROSITE-ProRule" id="PRU00535"/>
    </source>
</evidence>
<evidence type="ECO:0000256" key="5">
    <source>
        <dbReference type="SAM" id="MobiDB-lite"/>
    </source>
</evidence>
<evidence type="ECO:0000269" key="6">
    <source>
    </source>
</evidence>
<evidence type="ECO:0000269" key="7">
    <source>
    </source>
</evidence>
<evidence type="ECO:0000269" key="8">
    <source>
    </source>
</evidence>
<evidence type="ECO:0000269" key="9">
    <source>
    </source>
</evidence>
<evidence type="ECO:0000269" key="10">
    <source>
    </source>
</evidence>
<evidence type="ECO:0000305" key="11"/>
<comment type="function">
    <text evidence="6 7 8 10">Serine/threonine protein kinase which activates checkpoint signaling upon genotoxic stresses such as ionizing radiation (IR), ultraviolet light (UV), or DNA replication stalling, thereby acting as a DNA damage sensor. Recognizes the substrate consensus sequence [ST]-Q. Phosphorylates histone H2A to form H2AS128ph (gamma-H2A) at sites of DNA damage, involved in the regulation of DNA damage response mechanism. Undirectly involved in the phosphorylation of rad32 which is necessary for its telomere function. Required for the control of telomere length and genome stability.</text>
</comment>
<comment type="catalytic activity">
    <reaction>
        <text>L-seryl-[protein] + ATP = O-phospho-L-seryl-[protein] + ADP + H(+)</text>
        <dbReference type="Rhea" id="RHEA:17989"/>
        <dbReference type="Rhea" id="RHEA-COMP:9863"/>
        <dbReference type="Rhea" id="RHEA-COMP:11604"/>
        <dbReference type="ChEBI" id="CHEBI:15378"/>
        <dbReference type="ChEBI" id="CHEBI:29999"/>
        <dbReference type="ChEBI" id="CHEBI:30616"/>
        <dbReference type="ChEBI" id="CHEBI:83421"/>
        <dbReference type="ChEBI" id="CHEBI:456216"/>
        <dbReference type="EC" id="2.7.11.1"/>
    </reaction>
</comment>
<comment type="catalytic activity">
    <reaction>
        <text>L-threonyl-[protein] + ATP = O-phospho-L-threonyl-[protein] + ADP + H(+)</text>
        <dbReference type="Rhea" id="RHEA:46608"/>
        <dbReference type="Rhea" id="RHEA-COMP:11060"/>
        <dbReference type="Rhea" id="RHEA-COMP:11605"/>
        <dbReference type="ChEBI" id="CHEBI:15378"/>
        <dbReference type="ChEBI" id="CHEBI:30013"/>
        <dbReference type="ChEBI" id="CHEBI:30616"/>
        <dbReference type="ChEBI" id="CHEBI:61977"/>
        <dbReference type="ChEBI" id="CHEBI:456216"/>
        <dbReference type="EC" id="2.7.11.1"/>
    </reaction>
</comment>
<comment type="subunit">
    <text evidence="9">Interacts with nbs1. This interaction is required for phosphorylation of histone H2A.</text>
</comment>
<comment type="subcellular location">
    <subcellularLocation>
        <location evidence="1">Nucleus</location>
    </subcellularLocation>
    <subcellularLocation>
        <location evidence="1">Chromosome</location>
        <location evidence="1">Telomere</location>
    </subcellularLocation>
    <text evidence="1">Localizes to nuclear DNA repair foci with other DNA repair proteins in response to DNA double strand breaks.</text>
</comment>
<comment type="similarity">
    <text evidence="11">Belongs to the PI3/PI4-kinase family. ATM subfamily.</text>
</comment>
<organism>
    <name type="scientific">Schizosaccharomyces pombe (strain 972 / ATCC 24843)</name>
    <name type="common">Fission yeast</name>
    <dbReference type="NCBI Taxonomy" id="284812"/>
    <lineage>
        <taxon>Eukaryota</taxon>
        <taxon>Fungi</taxon>
        <taxon>Dikarya</taxon>
        <taxon>Ascomycota</taxon>
        <taxon>Taphrinomycotina</taxon>
        <taxon>Schizosaccharomycetes</taxon>
        <taxon>Schizosaccharomycetales</taxon>
        <taxon>Schizosaccharomycetaceae</taxon>
        <taxon>Schizosaccharomyces</taxon>
    </lineage>
</organism>
<dbReference type="EC" id="2.7.11.1"/>
<dbReference type="EMBL" id="AB001995">
    <property type="protein sequence ID" value="BAA33817.1"/>
    <property type="molecule type" value="Genomic_DNA"/>
</dbReference>
<dbReference type="EMBL" id="CU329672">
    <property type="protein sequence ID" value="CAB51562.1"/>
    <property type="molecule type" value="Genomic_DNA"/>
</dbReference>
<dbReference type="PIR" id="T43271">
    <property type="entry name" value="T43271"/>
</dbReference>
<dbReference type="RefSeq" id="NP_588126.1">
    <property type="nucleotide sequence ID" value="NM_001023116.2"/>
</dbReference>
<dbReference type="SMR" id="O74630"/>
<dbReference type="BioGRID" id="275779">
    <property type="interactions" value="33"/>
</dbReference>
<dbReference type="FunCoup" id="O74630">
    <property type="interactions" value="295"/>
</dbReference>
<dbReference type="IntAct" id="O74630">
    <property type="interactions" value="1"/>
</dbReference>
<dbReference type="STRING" id="284812.O74630"/>
<dbReference type="iPTMnet" id="O74630"/>
<dbReference type="PaxDb" id="4896-SPCC23B6.03c.1"/>
<dbReference type="EnsemblFungi" id="SPCC23B6.03c.1">
    <property type="protein sequence ID" value="SPCC23B6.03c.1:pep"/>
    <property type="gene ID" value="SPCC23B6.03c"/>
</dbReference>
<dbReference type="GeneID" id="2539209"/>
<dbReference type="KEGG" id="spo:2539209"/>
<dbReference type="PomBase" id="SPCC23B6.03c">
    <property type="gene designation" value="tel1"/>
</dbReference>
<dbReference type="VEuPathDB" id="FungiDB:SPCC23B6.03c"/>
<dbReference type="eggNOG" id="KOG0892">
    <property type="taxonomic scope" value="Eukaryota"/>
</dbReference>
<dbReference type="HOGENOM" id="CLU_226973_0_0_1"/>
<dbReference type="InParanoid" id="O74630"/>
<dbReference type="OMA" id="CGWSAFQ"/>
<dbReference type="Reactome" id="R-SPO-2559586">
    <property type="pathway name" value="DNA Damage/Telomere Stress Induced Senescence"/>
</dbReference>
<dbReference type="Reactome" id="R-SPO-5693548">
    <property type="pathway name" value="Sensing of DNA Double Strand Breaks"/>
</dbReference>
<dbReference type="Reactome" id="R-SPO-5693565">
    <property type="pathway name" value="Recruitment and ATM-mediated phosphorylation of repair and signaling proteins at DNA double strand breaks"/>
</dbReference>
<dbReference type="Reactome" id="R-SPO-5693607">
    <property type="pathway name" value="Processing of DNA double-strand break ends"/>
</dbReference>
<dbReference type="Reactome" id="R-SPO-6804756">
    <property type="pathway name" value="Regulation of TP53 Activity through Phosphorylation"/>
</dbReference>
<dbReference type="Reactome" id="R-SPO-9664873">
    <property type="pathway name" value="Pexophagy"/>
</dbReference>
<dbReference type="PRO" id="PR:O74630"/>
<dbReference type="Proteomes" id="UP000002485">
    <property type="component" value="Chromosome III"/>
</dbReference>
<dbReference type="GO" id="GO:0005694">
    <property type="term" value="C:chromosome"/>
    <property type="evidence" value="ECO:0000318"/>
    <property type="project" value="GO_Central"/>
</dbReference>
<dbReference type="GO" id="GO:0000781">
    <property type="term" value="C:chromosome, telomeric region"/>
    <property type="evidence" value="ECO:0007669"/>
    <property type="project" value="UniProtKB-SubCell"/>
</dbReference>
<dbReference type="GO" id="GO:0005829">
    <property type="term" value="C:cytosol"/>
    <property type="evidence" value="ECO:0007005"/>
    <property type="project" value="PomBase"/>
</dbReference>
<dbReference type="GO" id="GO:0005634">
    <property type="term" value="C:nucleus"/>
    <property type="evidence" value="ECO:0000318"/>
    <property type="project" value="GO_Central"/>
</dbReference>
<dbReference type="GO" id="GO:0005524">
    <property type="term" value="F:ATP binding"/>
    <property type="evidence" value="ECO:0007669"/>
    <property type="project" value="UniProtKB-KW"/>
</dbReference>
<dbReference type="GO" id="GO:0140995">
    <property type="term" value="F:histone H2A kinase activity"/>
    <property type="evidence" value="ECO:0000269"/>
    <property type="project" value="PomBase"/>
</dbReference>
<dbReference type="GO" id="GO:0004672">
    <property type="term" value="F:protein kinase activity"/>
    <property type="evidence" value="ECO:0000315"/>
    <property type="project" value="CACAO"/>
</dbReference>
<dbReference type="GO" id="GO:0106310">
    <property type="term" value="F:protein serine kinase activity"/>
    <property type="evidence" value="ECO:0007669"/>
    <property type="project" value="RHEA"/>
</dbReference>
<dbReference type="GO" id="GO:0004674">
    <property type="term" value="F:protein serine/threonine kinase activity"/>
    <property type="evidence" value="ECO:0000314"/>
    <property type="project" value="PomBase"/>
</dbReference>
<dbReference type="GO" id="GO:0000077">
    <property type="term" value="P:DNA damage checkpoint signaling"/>
    <property type="evidence" value="ECO:0000318"/>
    <property type="project" value="GO_Central"/>
</dbReference>
<dbReference type="GO" id="GO:0006302">
    <property type="term" value="P:double-strand break repair"/>
    <property type="evidence" value="ECO:0000318"/>
    <property type="project" value="GO_Central"/>
</dbReference>
<dbReference type="GO" id="GO:0044773">
    <property type="term" value="P:mitotic DNA damage checkpoint signaling"/>
    <property type="evidence" value="ECO:0000269"/>
    <property type="project" value="PomBase"/>
</dbReference>
<dbReference type="GO" id="GO:1904514">
    <property type="term" value="P:positive regulation of initiation of premeiotic DNA replication"/>
    <property type="evidence" value="ECO:0000315"/>
    <property type="project" value="PomBase"/>
</dbReference>
<dbReference type="GO" id="GO:0062209">
    <property type="term" value="P:spatial regulation of meiotic DNA double-strand break formation involved in reciprocal meiotic recombination"/>
    <property type="evidence" value="ECO:0000315"/>
    <property type="project" value="PomBase"/>
</dbReference>
<dbReference type="GO" id="GO:0000723">
    <property type="term" value="P:telomere maintenance"/>
    <property type="evidence" value="ECO:0000316"/>
    <property type="project" value="PomBase"/>
</dbReference>
<dbReference type="CDD" id="cd05171">
    <property type="entry name" value="PIKKc_ATM"/>
    <property type="match status" value="1"/>
</dbReference>
<dbReference type="Gene3D" id="1.10.1070.11">
    <property type="entry name" value="Phosphatidylinositol 3-/4-kinase, catalytic domain"/>
    <property type="match status" value="1"/>
</dbReference>
<dbReference type="Gene3D" id="3.30.1010.10">
    <property type="entry name" value="Phosphatidylinositol 3-kinase Catalytic Subunit, Chain A, domain 4"/>
    <property type="match status" value="1"/>
</dbReference>
<dbReference type="InterPro" id="IPR038980">
    <property type="entry name" value="ATM_plant"/>
</dbReference>
<dbReference type="InterPro" id="IPR003152">
    <property type="entry name" value="FATC_dom"/>
</dbReference>
<dbReference type="InterPro" id="IPR011009">
    <property type="entry name" value="Kinase-like_dom_sf"/>
</dbReference>
<dbReference type="InterPro" id="IPR000403">
    <property type="entry name" value="PI3/4_kinase_cat_dom"/>
</dbReference>
<dbReference type="InterPro" id="IPR036940">
    <property type="entry name" value="PI3/4_kinase_cat_sf"/>
</dbReference>
<dbReference type="InterPro" id="IPR018936">
    <property type="entry name" value="PI3/4_kinase_CS"/>
</dbReference>
<dbReference type="InterPro" id="IPR003151">
    <property type="entry name" value="PIK-rel_kinase_FAT"/>
</dbReference>
<dbReference type="InterPro" id="IPR014009">
    <property type="entry name" value="PIK_FAT"/>
</dbReference>
<dbReference type="InterPro" id="IPR044107">
    <property type="entry name" value="PIKKc_ATM"/>
</dbReference>
<dbReference type="InterPro" id="IPR021668">
    <property type="entry name" value="TAN"/>
</dbReference>
<dbReference type="PANTHER" id="PTHR37079">
    <property type="entry name" value="SERINE/THREONINE-PROTEIN KINASE ATM"/>
    <property type="match status" value="1"/>
</dbReference>
<dbReference type="PANTHER" id="PTHR37079:SF4">
    <property type="entry name" value="SERINE_THREONINE-PROTEIN KINASE ATM"/>
    <property type="match status" value="1"/>
</dbReference>
<dbReference type="Pfam" id="PF02259">
    <property type="entry name" value="FAT"/>
    <property type="match status" value="1"/>
</dbReference>
<dbReference type="Pfam" id="PF02260">
    <property type="entry name" value="FATC"/>
    <property type="match status" value="1"/>
</dbReference>
<dbReference type="Pfam" id="PF00454">
    <property type="entry name" value="PI3_PI4_kinase"/>
    <property type="match status" value="1"/>
</dbReference>
<dbReference type="Pfam" id="PF11640">
    <property type="entry name" value="TAN"/>
    <property type="match status" value="1"/>
</dbReference>
<dbReference type="SMART" id="SM01343">
    <property type="entry name" value="FATC"/>
    <property type="match status" value="1"/>
</dbReference>
<dbReference type="SMART" id="SM00146">
    <property type="entry name" value="PI3Kc"/>
    <property type="match status" value="1"/>
</dbReference>
<dbReference type="SMART" id="SM01342">
    <property type="entry name" value="TAN"/>
    <property type="match status" value="1"/>
</dbReference>
<dbReference type="SUPFAM" id="SSF56112">
    <property type="entry name" value="Protein kinase-like (PK-like)"/>
    <property type="match status" value="1"/>
</dbReference>
<dbReference type="PROSITE" id="PS51189">
    <property type="entry name" value="FAT"/>
    <property type="match status" value="1"/>
</dbReference>
<dbReference type="PROSITE" id="PS51190">
    <property type="entry name" value="FATC"/>
    <property type="match status" value="1"/>
</dbReference>
<dbReference type="PROSITE" id="PS00915">
    <property type="entry name" value="PI3_4_KINASE_1"/>
    <property type="match status" value="1"/>
</dbReference>
<dbReference type="PROSITE" id="PS00916">
    <property type="entry name" value="PI3_4_KINASE_2"/>
    <property type="match status" value="1"/>
</dbReference>
<dbReference type="PROSITE" id="PS50290">
    <property type="entry name" value="PI3_4_KINASE_3"/>
    <property type="match status" value="1"/>
</dbReference>
<gene>
    <name type="primary">tel1</name>
    <name type="ORF">SPCC23B6.03c</name>
</gene>
<proteinExistence type="evidence at protein level"/>
<name>ATM_SCHPO</name>
<accession>O74630</accession>